<accession>Q9S3W5</accession>
<keyword id="KW-0106">Calcium</keyword>
<keyword id="KW-0148">Chlorophyll</keyword>
<keyword id="KW-0157">Chromophore</keyword>
<keyword id="KW-0249">Electron transport</keyword>
<keyword id="KW-0359">Herbicide resistance</keyword>
<keyword id="KW-0408">Iron</keyword>
<keyword id="KW-0460">Magnesium</keyword>
<keyword id="KW-0464">Manganese</keyword>
<keyword id="KW-0472">Membrane</keyword>
<keyword id="KW-0479">Metal-binding</keyword>
<keyword id="KW-0560">Oxidoreductase</keyword>
<keyword id="KW-0602">Photosynthesis</keyword>
<keyword id="KW-0604">Photosystem II</keyword>
<keyword id="KW-0793">Thylakoid</keyword>
<keyword id="KW-0812">Transmembrane</keyword>
<keyword id="KW-1133">Transmembrane helix</keyword>
<keyword id="KW-0813">Transport</keyword>
<gene>
    <name evidence="1" type="primary">psbA</name>
</gene>
<dbReference type="EC" id="1.10.3.9" evidence="1"/>
<dbReference type="EMBL" id="AF170924">
    <property type="protein sequence ID" value="AAD51002.1"/>
    <property type="molecule type" value="Genomic_DNA"/>
</dbReference>
<dbReference type="SMR" id="Q9S3W5"/>
<dbReference type="GO" id="GO:0009523">
    <property type="term" value="C:photosystem II"/>
    <property type="evidence" value="ECO:0007669"/>
    <property type="project" value="UniProtKB-KW"/>
</dbReference>
<dbReference type="GO" id="GO:0031676">
    <property type="term" value="C:plasma membrane-derived thylakoid membrane"/>
    <property type="evidence" value="ECO:0007669"/>
    <property type="project" value="UniProtKB-SubCell"/>
</dbReference>
<dbReference type="GO" id="GO:0016168">
    <property type="term" value="F:chlorophyll binding"/>
    <property type="evidence" value="ECO:0007669"/>
    <property type="project" value="UniProtKB-UniRule"/>
</dbReference>
<dbReference type="GO" id="GO:0045156">
    <property type="term" value="F:electron transporter, transferring electrons within the cyclic electron transport pathway of photosynthesis activity"/>
    <property type="evidence" value="ECO:0007669"/>
    <property type="project" value="InterPro"/>
</dbReference>
<dbReference type="GO" id="GO:0005506">
    <property type="term" value="F:iron ion binding"/>
    <property type="evidence" value="ECO:0007669"/>
    <property type="project" value="UniProtKB-UniRule"/>
</dbReference>
<dbReference type="GO" id="GO:0016682">
    <property type="term" value="F:oxidoreductase activity, acting on diphenols and related substances as donors, oxygen as acceptor"/>
    <property type="evidence" value="ECO:0007669"/>
    <property type="project" value="UniProtKB-UniRule"/>
</dbReference>
<dbReference type="GO" id="GO:0010242">
    <property type="term" value="F:oxygen evolving activity"/>
    <property type="evidence" value="ECO:0007669"/>
    <property type="project" value="UniProtKB-EC"/>
</dbReference>
<dbReference type="GO" id="GO:0009772">
    <property type="term" value="P:photosynthetic electron transport in photosystem II"/>
    <property type="evidence" value="ECO:0007669"/>
    <property type="project" value="InterPro"/>
</dbReference>
<dbReference type="GO" id="GO:0009635">
    <property type="term" value="P:response to herbicide"/>
    <property type="evidence" value="ECO:0007669"/>
    <property type="project" value="UniProtKB-KW"/>
</dbReference>
<dbReference type="CDD" id="cd09289">
    <property type="entry name" value="Photosystem-II_D1"/>
    <property type="match status" value="1"/>
</dbReference>
<dbReference type="FunFam" id="1.20.85.10:FF:000002">
    <property type="entry name" value="Photosystem II protein D1"/>
    <property type="match status" value="1"/>
</dbReference>
<dbReference type="Gene3D" id="1.20.85.10">
    <property type="entry name" value="Photosystem II protein D1-like"/>
    <property type="match status" value="1"/>
</dbReference>
<dbReference type="HAMAP" id="MF_01379">
    <property type="entry name" value="PSII_PsbA_D1"/>
    <property type="match status" value="1"/>
</dbReference>
<dbReference type="InterPro" id="IPR055266">
    <property type="entry name" value="D1/D2"/>
</dbReference>
<dbReference type="InterPro" id="IPR036854">
    <property type="entry name" value="Photo_II_D1/D2_sf"/>
</dbReference>
<dbReference type="InterPro" id="IPR000484">
    <property type="entry name" value="Photo_RC_L/M"/>
</dbReference>
<dbReference type="InterPro" id="IPR055265">
    <property type="entry name" value="Photo_RC_L/M_CS"/>
</dbReference>
<dbReference type="InterPro" id="IPR005867">
    <property type="entry name" value="PSII_D1"/>
</dbReference>
<dbReference type="NCBIfam" id="TIGR01151">
    <property type="entry name" value="psbA"/>
    <property type="match status" value="1"/>
</dbReference>
<dbReference type="PANTHER" id="PTHR33149:SF12">
    <property type="entry name" value="PHOTOSYSTEM II D2 PROTEIN"/>
    <property type="match status" value="1"/>
</dbReference>
<dbReference type="PANTHER" id="PTHR33149">
    <property type="entry name" value="PHOTOSYSTEM II PROTEIN D1"/>
    <property type="match status" value="1"/>
</dbReference>
<dbReference type="Pfam" id="PF00124">
    <property type="entry name" value="Photo_RC"/>
    <property type="match status" value="1"/>
</dbReference>
<dbReference type="PRINTS" id="PR00256">
    <property type="entry name" value="REACTNCENTRE"/>
</dbReference>
<dbReference type="SUPFAM" id="SSF81483">
    <property type="entry name" value="Bacterial photosystem II reaction centre, L and M subunits"/>
    <property type="match status" value="1"/>
</dbReference>
<dbReference type="PROSITE" id="PS00244">
    <property type="entry name" value="REACTION_CENTER"/>
    <property type="match status" value="1"/>
</dbReference>
<evidence type="ECO:0000255" key="1">
    <source>
        <dbReference type="HAMAP-Rule" id="MF_01379"/>
    </source>
</evidence>
<sequence length="358" mass="39757">MTTTLRRGETGSLWDRFCDWITSTNNRIYVGWFGVLMIPTLLAATICFVIAFIAAPPVDIDGIREPVSGSLLYGNNIITGAVVPTSNAIGLHFYPIWEALDEWLYNGGPYELIVFHFLIGIFCWLGRQWELSYRLGMRPWICVAYSAPVAAATSVFLIYPIGQGSFSDGMPLGITGTFNFMLVFQAEHNILMHPFHQLGVAGVFGGSLFCAMHGSLVTSSLVRETTETESQNYGYKFGQEQETYSIVAAHGYFGRLIWQYASFNNSRSLHFFLAAWPVVCIWFTALGISTMAFNLNGFNFNQSILDSQGRVVNTWADILNRANLGMEVMHERNAHNFPLDLAAGEVLPIALQSPAING</sequence>
<comment type="function">
    <text evidence="1">Photosystem II (PSII) is a light-driven water:plastoquinone oxidoreductase that uses light energy to abstract electrons from H(2)O, generating O(2) and a proton gradient subsequently used for ATP formation. It consists of a core antenna complex that captures photons, and an electron transfer chain that converts photonic excitation into a charge separation. The D1/D2 (PsbA/PsbD) reaction center heterodimer binds P680, the primary electron donor of PSII as well as several subsequent electron acceptors.</text>
</comment>
<comment type="catalytic activity">
    <reaction evidence="1">
        <text>2 a plastoquinone + 4 hnu + 2 H2O = 2 a plastoquinol + O2</text>
        <dbReference type="Rhea" id="RHEA:36359"/>
        <dbReference type="Rhea" id="RHEA-COMP:9561"/>
        <dbReference type="Rhea" id="RHEA-COMP:9562"/>
        <dbReference type="ChEBI" id="CHEBI:15377"/>
        <dbReference type="ChEBI" id="CHEBI:15379"/>
        <dbReference type="ChEBI" id="CHEBI:17757"/>
        <dbReference type="ChEBI" id="CHEBI:30212"/>
        <dbReference type="ChEBI" id="CHEBI:62192"/>
        <dbReference type="EC" id="1.10.3.9"/>
    </reaction>
</comment>
<comment type="cofactor">
    <text evidence="1">The D1/D2 heterodimer binds P680, chlorophylls that are the primary electron donor of PSII, and subsequent electron acceptors. It shares a non-heme iron and each subunit binds pheophytin, quinone, additional chlorophylls, carotenoids and lipids. D1 provides most of the ligands for the Mn4-Ca-O5 cluster of the oxygen-evolving complex (OEC). There is also a Cl(-1) ion associated with D1 and D2, which is required for oxygen evolution. The PSII complex binds additional chlorophylls, carotenoids and specific lipids.</text>
</comment>
<comment type="subunit">
    <text evidence="1">PSII is composed of 1 copy each of membrane proteins PsbA, PsbB, PsbC, PsbD, PsbE, PsbF, PsbH, PsbI, PsbJ, PsbK, PsbL, PsbM, PsbT, PsbX, PsbY, PsbZ, Psb30/Ycf12, peripheral proteins PsbO, CyanoQ (PsbQ), PsbU, PsbV and a large number of cofactors. It forms dimeric complexes.</text>
</comment>
<comment type="subcellular location">
    <subcellularLocation>
        <location evidence="1">Cellular thylakoid membrane</location>
        <topology evidence="1">Multi-pass membrane protein</topology>
    </subcellularLocation>
</comment>
<comment type="PTM">
    <text evidence="1">Tyr-159 forms a radical intermediate that is referred to as redox-active TyrZ, YZ or Y-Z.</text>
</comment>
<comment type="PTM">
    <text evidence="1">C-terminally processed by CtpA; processing is essential to allow assembly of the oxygen-evolving complex and thus photosynthetic growth.</text>
</comment>
<comment type="miscellaneous">
    <text evidence="1">Cyanobacteria usually contain more than 2 copies of the psbA gene.</text>
</comment>
<comment type="miscellaneous">
    <text evidence="1">2 of the reaction center chlorophylls (ChlD1 and ChlD2) are entirely coordinated by water.</text>
</comment>
<comment type="miscellaneous">
    <text evidence="1">Herbicides such as atrazine, BNT, diuron or ioxynil bind in the Q(B) binding site and block subsequent electron transfer.</text>
</comment>
<comment type="similarity">
    <text evidence="1">Belongs to the reaction center PufL/M/PsbA/D family.</text>
</comment>
<organism>
    <name type="scientific">Mastigocladus laminosus</name>
    <name type="common">Fischerella sp.</name>
    <dbReference type="NCBI Taxonomy" id="83541"/>
    <lineage>
        <taxon>Bacteria</taxon>
        <taxon>Bacillati</taxon>
        <taxon>Cyanobacteriota</taxon>
        <taxon>Cyanophyceae</taxon>
        <taxon>Nostocales</taxon>
        <taxon>Hapalosiphonaceae</taxon>
        <taxon>Mastigocladus</taxon>
    </lineage>
</organism>
<name>PSBA_MASLA</name>
<feature type="chain" id="PRO_0000316351" description="Photosystem II protein D1" evidence="1">
    <location>
        <begin position="1"/>
        <end position="342"/>
    </location>
</feature>
<feature type="propeptide" id="PRO_0000316352" evidence="1">
    <location>
        <begin position="343"/>
        <end position="358"/>
    </location>
</feature>
<feature type="transmembrane region" description="Helical" evidence="1">
    <location>
        <begin position="29"/>
        <end position="46"/>
    </location>
</feature>
<feature type="transmembrane region" description="Helical" evidence="1">
    <location>
        <begin position="116"/>
        <end position="131"/>
    </location>
</feature>
<feature type="transmembrane region" description="Helical" evidence="1">
    <location>
        <begin position="140"/>
        <end position="154"/>
    </location>
</feature>
<feature type="transmembrane region" description="Helical" evidence="1">
    <location>
        <begin position="195"/>
        <end position="216"/>
    </location>
</feature>
<feature type="transmembrane region" description="Helical" evidence="1">
    <location>
        <begin position="272"/>
        <end position="286"/>
    </location>
</feature>
<feature type="binding site" description="axial binding residue" evidence="1">
    <location>
        <position position="116"/>
    </location>
    <ligand>
        <name>chlorophyll a</name>
        <dbReference type="ChEBI" id="CHEBI:58416"/>
        <label>ChlzD1</label>
    </ligand>
    <ligandPart>
        <name>Mg</name>
        <dbReference type="ChEBI" id="CHEBI:25107"/>
    </ligandPart>
</feature>
<feature type="binding site" evidence="1">
    <location>
        <position position="124"/>
    </location>
    <ligand>
        <name>pheophytin a</name>
        <dbReference type="ChEBI" id="CHEBI:136840"/>
        <label>D1</label>
    </ligand>
</feature>
<feature type="binding site" evidence="1">
    <location>
        <position position="168"/>
    </location>
    <ligand>
        <name>[CaMn4O5] cluster</name>
        <dbReference type="ChEBI" id="CHEBI:189552"/>
    </ligand>
</feature>
<feature type="binding site" evidence="1">
    <location>
        <position position="187"/>
    </location>
    <ligand>
        <name>[CaMn4O5] cluster</name>
        <dbReference type="ChEBI" id="CHEBI:189552"/>
    </ligand>
</feature>
<feature type="binding site" description="axial binding residue" evidence="1">
    <location>
        <position position="196"/>
    </location>
    <ligand>
        <name>chlorophyll a</name>
        <dbReference type="ChEBI" id="CHEBI:58416"/>
        <label>PD1</label>
    </ligand>
    <ligandPart>
        <name>Mg</name>
        <dbReference type="ChEBI" id="CHEBI:25107"/>
    </ligandPart>
</feature>
<feature type="binding site" evidence="1">
    <location>
        <position position="213"/>
    </location>
    <ligand>
        <name>a quinone</name>
        <dbReference type="ChEBI" id="CHEBI:132124"/>
        <label>B</label>
    </ligand>
</feature>
<feature type="binding site" evidence="1">
    <location>
        <position position="213"/>
    </location>
    <ligand>
        <name>Fe cation</name>
        <dbReference type="ChEBI" id="CHEBI:24875"/>
        <note>ligand shared with heterodimeric partner</note>
    </ligand>
</feature>
<feature type="binding site" evidence="1">
    <location>
        <begin position="262"/>
        <end position="263"/>
    </location>
    <ligand>
        <name>a quinone</name>
        <dbReference type="ChEBI" id="CHEBI:132124"/>
        <label>B</label>
    </ligand>
</feature>
<feature type="binding site" evidence="1">
    <location>
        <position position="270"/>
    </location>
    <ligand>
        <name>Fe cation</name>
        <dbReference type="ChEBI" id="CHEBI:24875"/>
        <note>ligand shared with heterodimeric partner</note>
    </ligand>
</feature>
<feature type="binding site" evidence="1">
    <location>
        <position position="330"/>
    </location>
    <ligand>
        <name>[CaMn4O5] cluster</name>
        <dbReference type="ChEBI" id="CHEBI:189552"/>
    </ligand>
</feature>
<feature type="binding site" evidence="1">
    <location>
        <position position="331"/>
    </location>
    <ligand>
        <name>[CaMn4O5] cluster</name>
        <dbReference type="ChEBI" id="CHEBI:189552"/>
    </ligand>
</feature>
<feature type="binding site" evidence="1">
    <location>
        <position position="340"/>
    </location>
    <ligand>
        <name>[CaMn4O5] cluster</name>
        <dbReference type="ChEBI" id="CHEBI:189552"/>
    </ligand>
</feature>
<feature type="binding site" evidence="1">
    <location>
        <position position="342"/>
    </location>
    <ligand>
        <name>[CaMn4O5] cluster</name>
        <dbReference type="ChEBI" id="CHEBI:189552"/>
    </ligand>
</feature>
<feature type="site" description="Tyrosine radical intermediate" evidence="1">
    <location>
        <position position="159"/>
    </location>
</feature>
<feature type="site" description="Stabilizes free radical intermediate" evidence="1">
    <location>
        <position position="188"/>
    </location>
</feature>
<feature type="site" description="Cleavage; by CtpA" evidence="1">
    <location>
        <begin position="342"/>
        <end position="343"/>
    </location>
</feature>
<proteinExistence type="inferred from homology"/>
<reference key="1">
    <citation type="submission" date="1999-07" db="EMBL/GenBank/DDBJ databases">
        <title>Isolation of a gene encoding the D1 protein of photosystem II from the thermophilic cyanobacterium Mastigocladus laminosus.</title>
        <authorList>
            <person name="He Z.Y."/>
            <person name="Nechushtai R."/>
        </authorList>
    </citation>
    <scope>NUCLEOTIDE SEQUENCE [GENOMIC DNA]</scope>
</reference>
<protein>
    <recommendedName>
        <fullName evidence="1">Photosystem II protein D1</fullName>
        <shortName evidence="1">PSII D1 protein</shortName>
        <ecNumber evidence="1">1.10.3.9</ecNumber>
    </recommendedName>
    <alternativeName>
        <fullName evidence="1">Photosystem II Q(B) protein</fullName>
    </alternativeName>
</protein>